<accession>Q9BJV8</accession>
<reference key="1">
    <citation type="journal article" date="2001" name="J. Biol. Chem.">
        <title>Discovery and structure of a potent and highly specific blocker of insect calcium channels.</title>
        <authorList>
            <person name="Wang X.-H."/>
            <person name="Connor M."/>
            <person name="Wilson D."/>
            <person name="Wilson H.I."/>
            <person name="Nicholson G.M."/>
            <person name="Smith R."/>
            <person name="Shaw D."/>
            <person name="Mackay J.P."/>
            <person name="Alewood P.F."/>
            <person name="Christie M.J."/>
            <person name="King G.F."/>
        </authorList>
    </citation>
    <scope>NUCLEOTIDE SEQUENCE [MRNA]</scope>
    <source>
        <tissue>Venom gland</tissue>
    </source>
</reference>
<name>TOT2A_ATRIL</name>
<protein>
    <recommendedName>
        <fullName>Omega-hexatoxin-Asp2a</fullName>
        <shortName>Omega-HXTX-Asp2a</shortName>
    </recommendedName>
    <alternativeName>
        <fullName>Omega-atracotoxin-As2a</fullName>
        <shortName>Omega-AcTx-As2a</shortName>
    </alternativeName>
</protein>
<feature type="signal peptide" evidence="3">
    <location>
        <begin position="1"/>
        <end position="23"/>
    </location>
</feature>
<feature type="propeptide" id="PRO_0000035551" evidence="1">
    <location>
        <begin position="24"/>
        <end position="55"/>
    </location>
</feature>
<feature type="chain" id="PRO_0000035552" description="Omega-hexatoxin-Asp2a">
    <location>
        <begin position="56"/>
        <end position="100"/>
    </location>
</feature>
<feature type="disulfide bond" evidence="2">
    <location>
        <begin position="60"/>
        <end position="73"/>
    </location>
</feature>
<feature type="disulfide bond" evidence="2">
    <location>
        <begin position="66"/>
        <end position="79"/>
    </location>
</feature>
<feature type="disulfide bond" evidence="2">
    <location>
        <begin position="72"/>
        <end position="84"/>
    </location>
</feature>
<dbReference type="EMBL" id="AF329444">
    <property type="protein sequence ID" value="AAK17947.1"/>
    <property type="molecule type" value="mRNA"/>
</dbReference>
<dbReference type="ArachnoServer" id="AS000202">
    <property type="toxin name" value="omega-hexatoxin-Asp2a"/>
</dbReference>
<dbReference type="GO" id="GO:0005576">
    <property type="term" value="C:extracellular region"/>
    <property type="evidence" value="ECO:0007669"/>
    <property type="project" value="UniProtKB-SubCell"/>
</dbReference>
<dbReference type="GO" id="GO:0005246">
    <property type="term" value="F:calcium channel regulator activity"/>
    <property type="evidence" value="ECO:0007669"/>
    <property type="project" value="UniProtKB-KW"/>
</dbReference>
<dbReference type="GO" id="GO:0019871">
    <property type="term" value="F:sodium channel inhibitor activity"/>
    <property type="evidence" value="ECO:0007669"/>
    <property type="project" value="InterPro"/>
</dbReference>
<dbReference type="GO" id="GO:0090729">
    <property type="term" value="F:toxin activity"/>
    <property type="evidence" value="ECO:0007669"/>
    <property type="project" value="UniProtKB-KW"/>
</dbReference>
<dbReference type="Gene3D" id="4.10.40.10">
    <property type="match status" value="1"/>
</dbReference>
<dbReference type="InterPro" id="IPR013139">
    <property type="entry name" value="Omega_atracotoxin_CS2"/>
</dbReference>
<dbReference type="InterPro" id="IPR012628">
    <property type="entry name" value="Toxin_23"/>
</dbReference>
<dbReference type="Pfam" id="PF08093">
    <property type="entry name" value="Toxin_23"/>
    <property type="match status" value="1"/>
</dbReference>
<dbReference type="SUPFAM" id="SSF57059">
    <property type="entry name" value="omega toxin-like"/>
    <property type="match status" value="1"/>
</dbReference>
<dbReference type="PROSITE" id="PS60017">
    <property type="entry name" value="OMEGA_ACTX_2"/>
    <property type="match status" value="1"/>
</dbReference>
<sequence length="100" mass="10609">MKFSKLSITLAVILTQAVFVLCGMKNEDFMEKGLESNELHDAIKKPVNSGKPDTERLLDCVLSRVCSPDANCCGLTPICKMGLCVPKVGGLLGGLLGGIL</sequence>
<comment type="function">
    <text evidence="2">Potent inhibitor of insect, but not mammalian, voltage-gated calcium channels (Cav).</text>
</comment>
<comment type="subcellular location">
    <subcellularLocation>
        <location evidence="5">Secreted</location>
    </subcellularLocation>
</comment>
<comment type="tissue specificity">
    <text evidence="5">Expressed by the venom gland.</text>
</comment>
<comment type="domain">
    <text evidence="4">The presence of a 'disulfide through disulfide knot' structurally defines this protein as a knottin.</text>
</comment>
<comment type="similarity">
    <text evidence="4">Belongs to the neurotoxin 15 family. 02 (omega-actx) subfamily.</text>
</comment>
<keyword id="KW-0108">Calcium channel impairing toxin</keyword>
<keyword id="KW-1015">Disulfide bond</keyword>
<keyword id="KW-0872">Ion channel impairing toxin</keyword>
<keyword id="KW-0960">Knottin</keyword>
<keyword id="KW-0528">Neurotoxin</keyword>
<keyword id="KW-0964">Secreted</keyword>
<keyword id="KW-0732">Signal</keyword>
<keyword id="KW-0800">Toxin</keyword>
<keyword id="KW-1218">Voltage-gated calcium channel impairing toxin</keyword>
<proteinExistence type="inferred from homology"/>
<evidence type="ECO:0000250" key="1"/>
<evidence type="ECO:0000250" key="2">
    <source>
        <dbReference type="UniProtKB" id="P82852"/>
    </source>
</evidence>
<evidence type="ECO:0000255" key="3"/>
<evidence type="ECO:0000305" key="4"/>
<evidence type="ECO:0000305" key="5">
    <source>
    </source>
</evidence>
<organism>
    <name type="scientific">Atrax sp. (strain Illawarra)</name>
    <name type="common">Funnel-web spider</name>
    <dbReference type="NCBI Taxonomy" id="153482"/>
    <lineage>
        <taxon>Eukaryota</taxon>
        <taxon>Metazoa</taxon>
        <taxon>Ecdysozoa</taxon>
        <taxon>Arthropoda</taxon>
        <taxon>Chelicerata</taxon>
        <taxon>Arachnida</taxon>
        <taxon>Araneae</taxon>
        <taxon>Mygalomorphae</taxon>
        <taxon>Hexathelidae</taxon>
        <taxon>Atrax</taxon>
    </lineage>
</organism>